<protein>
    <recommendedName>
        <fullName>Uncharacterized protein YdbB</fullName>
    </recommendedName>
</protein>
<dbReference type="EMBL" id="AB001488">
    <property type="protein sequence ID" value="BAA19278.1"/>
    <property type="molecule type" value="Genomic_DNA"/>
</dbReference>
<dbReference type="EMBL" id="AL009126">
    <property type="protein sequence ID" value="CAB12248.1"/>
    <property type="molecule type" value="Genomic_DNA"/>
</dbReference>
<dbReference type="PIR" id="E69770">
    <property type="entry name" value="E69770"/>
</dbReference>
<dbReference type="RefSeq" id="NP_388322.1">
    <property type="nucleotide sequence ID" value="NC_000964.3"/>
</dbReference>
<dbReference type="RefSeq" id="WP_003246564.1">
    <property type="nucleotide sequence ID" value="NZ_OZ025638.1"/>
</dbReference>
<dbReference type="SMR" id="P96597"/>
<dbReference type="FunCoup" id="P96597">
    <property type="interactions" value="5"/>
</dbReference>
<dbReference type="STRING" id="224308.BSU04410"/>
<dbReference type="PaxDb" id="224308-BSU04410"/>
<dbReference type="EnsemblBacteria" id="CAB12248">
    <property type="protein sequence ID" value="CAB12248"/>
    <property type="gene ID" value="BSU_04410"/>
</dbReference>
<dbReference type="GeneID" id="935969"/>
<dbReference type="KEGG" id="bsu:BSU04410"/>
<dbReference type="PATRIC" id="fig|224308.179.peg.467"/>
<dbReference type="eggNOG" id="COG0662">
    <property type="taxonomic scope" value="Bacteria"/>
</dbReference>
<dbReference type="InParanoid" id="P96597"/>
<dbReference type="OrthoDB" id="9794183at2"/>
<dbReference type="PhylomeDB" id="P96597"/>
<dbReference type="BioCyc" id="BSUB:BSU04410-MONOMER"/>
<dbReference type="Proteomes" id="UP000001570">
    <property type="component" value="Chromosome"/>
</dbReference>
<dbReference type="GO" id="GO:0030145">
    <property type="term" value="F:manganese ion binding"/>
    <property type="evidence" value="ECO:0007669"/>
    <property type="project" value="InterPro"/>
</dbReference>
<dbReference type="CDD" id="cd02226">
    <property type="entry name" value="cupin_YdbB-like"/>
    <property type="match status" value="1"/>
</dbReference>
<dbReference type="Gene3D" id="2.60.120.10">
    <property type="entry name" value="Jelly Rolls"/>
    <property type="match status" value="1"/>
</dbReference>
<dbReference type="InterPro" id="IPR013096">
    <property type="entry name" value="Cupin_2"/>
</dbReference>
<dbReference type="InterPro" id="IPR019780">
    <property type="entry name" value="Germin_Mn-BS"/>
</dbReference>
<dbReference type="InterPro" id="IPR052044">
    <property type="entry name" value="PKS_Associated_Protein"/>
</dbReference>
<dbReference type="InterPro" id="IPR014710">
    <property type="entry name" value="RmlC-like_jellyroll"/>
</dbReference>
<dbReference type="InterPro" id="IPR011051">
    <property type="entry name" value="RmlC_Cupin_sf"/>
</dbReference>
<dbReference type="PANTHER" id="PTHR36114">
    <property type="entry name" value="16.7 KDA PROTEIN IN WHIE LOCUS"/>
    <property type="match status" value="1"/>
</dbReference>
<dbReference type="PANTHER" id="PTHR36114:SF1">
    <property type="entry name" value="16.7 KDA PROTEIN IN WHIE LOCUS"/>
    <property type="match status" value="1"/>
</dbReference>
<dbReference type="Pfam" id="PF07883">
    <property type="entry name" value="Cupin_2"/>
    <property type="match status" value="1"/>
</dbReference>
<dbReference type="SUPFAM" id="SSF51182">
    <property type="entry name" value="RmlC-like cupins"/>
    <property type="match status" value="1"/>
</dbReference>
<evidence type="ECO:0000255" key="1"/>
<evidence type="ECO:0000305" key="2"/>
<organism>
    <name type="scientific">Bacillus subtilis (strain 168)</name>
    <dbReference type="NCBI Taxonomy" id="224308"/>
    <lineage>
        <taxon>Bacteria</taxon>
        <taxon>Bacillati</taxon>
        <taxon>Bacillota</taxon>
        <taxon>Bacilli</taxon>
        <taxon>Bacillales</taxon>
        <taxon>Bacillaceae</taxon>
        <taxon>Bacillus</taxon>
    </lineage>
</organism>
<reference key="1">
    <citation type="submission" date="1997-03" db="EMBL/GenBank/DDBJ databases">
        <title>A 148 kbp sequence of the region between 35 and 47 degree of the Bacillus subtilis genome.</title>
        <authorList>
            <person name="Kasahara Y."/>
            <person name="Nakai S."/>
            <person name="Lee S."/>
            <person name="Sadaie Y."/>
            <person name="Ogasawara N."/>
        </authorList>
    </citation>
    <scope>NUCLEOTIDE SEQUENCE [GENOMIC DNA]</scope>
    <source>
        <strain>168</strain>
    </source>
</reference>
<reference key="2">
    <citation type="journal article" date="1997" name="Nature">
        <title>The complete genome sequence of the Gram-positive bacterium Bacillus subtilis.</title>
        <authorList>
            <person name="Kunst F."/>
            <person name="Ogasawara N."/>
            <person name="Moszer I."/>
            <person name="Albertini A.M."/>
            <person name="Alloni G."/>
            <person name="Azevedo V."/>
            <person name="Bertero M.G."/>
            <person name="Bessieres P."/>
            <person name="Bolotin A."/>
            <person name="Borchert S."/>
            <person name="Borriss R."/>
            <person name="Boursier L."/>
            <person name="Brans A."/>
            <person name="Braun M."/>
            <person name="Brignell S.C."/>
            <person name="Bron S."/>
            <person name="Brouillet S."/>
            <person name="Bruschi C.V."/>
            <person name="Caldwell B."/>
            <person name="Capuano V."/>
            <person name="Carter N.M."/>
            <person name="Choi S.-K."/>
            <person name="Codani J.-J."/>
            <person name="Connerton I.F."/>
            <person name="Cummings N.J."/>
            <person name="Daniel R.A."/>
            <person name="Denizot F."/>
            <person name="Devine K.M."/>
            <person name="Duesterhoeft A."/>
            <person name="Ehrlich S.D."/>
            <person name="Emmerson P.T."/>
            <person name="Entian K.-D."/>
            <person name="Errington J."/>
            <person name="Fabret C."/>
            <person name="Ferrari E."/>
            <person name="Foulger D."/>
            <person name="Fritz C."/>
            <person name="Fujita M."/>
            <person name="Fujita Y."/>
            <person name="Fuma S."/>
            <person name="Galizzi A."/>
            <person name="Galleron N."/>
            <person name="Ghim S.-Y."/>
            <person name="Glaser P."/>
            <person name="Goffeau A."/>
            <person name="Golightly E.J."/>
            <person name="Grandi G."/>
            <person name="Guiseppi G."/>
            <person name="Guy B.J."/>
            <person name="Haga K."/>
            <person name="Haiech J."/>
            <person name="Harwood C.R."/>
            <person name="Henaut A."/>
            <person name="Hilbert H."/>
            <person name="Holsappel S."/>
            <person name="Hosono S."/>
            <person name="Hullo M.-F."/>
            <person name="Itaya M."/>
            <person name="Jones L.-M."/>
            <person name="Joris B."/>
            <person name="Karamata D."/>
            <person name="Kasahara Y."/>
            <person name="Klaerr-Blanchard M."/>
            <person name="Klein C."/>
            <person name="Kobayashi Y."/>
            <person name="Koetter P."/>
            <person name="Koningstein G."/>
            <person name="Krogh S."/>
            <person name="Kumano M."/>
            <person name="Kurita K."/>
            <person name="Lapidus A."/>
            <person name="Lardinois S."/>
            <person name="Lauber J."/>
            <person name="Lazarevic V."/>
            <person name="Lee S.-M."/>
            <person name="Levine A."/>
            <person name="Liu H."/>
            <person name="Masuda S."/>
            <person name="Mauel C."/>
            <person name="Medigue C."/>
            <person name="Medina N."/>
            <person name="Mellado R.P."/>
            <person name="Mizuno M."/>
            <person name="Moestl D."/>
            <person name="Nakai S."/>
            <person name="Noback M."/>
            <person name="Noone D."/>
            <person name="O'Reilly M."/>
            <person name="Ogawa K."/>
            <person name="Ogiwara A."/>
            <person name="Oudega B."/>
            <person name="Park S.-H."/>
            <person name="Parro V."/>
            <person name="Pohl T.M."/>
            <person name="Portetelle D."/>
            <person name="Porwollik S."/>
            <person name="Prescott A.M."/>
            <person name="Presecan E."/>
            <person name="Pujic P."/>
            <person name="Purnelle B."/>
            <person name="Rapoport G."/>
            <person name="Rey M."/>
            <person name="Reynolds S."/>
            <person name="Rieger M."/>
            <person name="Rivolta C."/>
            <person name="Rocha E."/>
            <person name="Roche B."/>
            <person name="Rose M."/>
            <person name="Sadaie Y."/>
            <person name="Sato T."/>
            <person name="Scanlan E."/>
            <person name="Schleich S."/>
            <person name="Schroeter R."/>
            <person name="Scoffone F."/>
            <person name="Sekiguchi J."/>
            <person name="Sekowska A."/>
            <person name="Seror S.J."/>
            <person name="Serror P."/>
            <person name="Shin B.-S."/>
            <person name="Soldo B."/>
            <person name="Sorokin A."/>
            <person name="Tacconi E."/>
            <person name="Takagi T."/>
            <person name="Takahashi H."/>
            <person name="Takemaru K."/>
            <person name="Takeuchi M."/>
            <person name="Tamakoshi A."/>
            <person name="Tanaka T."/>
            <person name="Terpstra P."/>
            <person name="Tognoni A."/>
            <person name="Tosato V."/>
            <person name="Uchiyama S."/>
            <person name="Vandenbol M."/>
            <person name="Vannier F."/>
            <person name="Vassarotti A."/>
            <person name="Viari A."/>
            <person name="Wambutt R."/>
            <person name="Wedler E."/>
            <person name="Wedler H."/>
            <person name="Weitzenegger T."/>
            <person name="Winters P."/>
            <person name="Wipat A."/>
            <person name="Yamamoto H."/>
            <person name="Yamane K."/>
            <person name="Yasumoto K."/>
            <person name="Yata K."/>
            <person name="Yoshida K."/>
            <person name="Yoshikawa H.-F."/>
            <person name="Zumstein E."/>
            <person name="Yoshikawa H."/>
            <person name="Danchin A."/>
        </authorList>
    </citation>
    <scope>NUCLEOTIDE SEQUENCE [LARGE SCALE GENOMIC DNA]</scope>
    <source>
        <strain>168</strain>
    </source>
</reference>
<accession>P96597</accession>
<accession>Q797L8</accession>
<proteinExistence type="inferred from homology"/>
<comment type="similarity">
    <text evidence="2">Belongs to the SchB/CurC family.</text>
</comment>
<keyword id="KW-1185">Reference proteome</keyword>
<name>YDBB_BACSU</name>
<sequence length="113" mass="12942">MSKMQNLLAIANEVKEKHANFSISEVNDHCVRLAVFTGEYDWHHHPDSDELFIVLEGELLIDFKDKETAVLKANDSLLIPKGTVHRTRSYVRTVNLCVEHKQAETVIIEEQPC</sequence>
<feature type="chain" id="PRO_0000390920" description="Uncharacterized protein YdbB">
    <location>
        <begin position="1"/>
        <end position="113"/>
    </location>
</feature>
<feature type="domain" description="Cupin type-2" evidence="1">
    <location>
        <begin position="41"/>
        <end position="88"/>
    </location>
</feature>
<gene>
    <name type="primary">ydbB</name>
    <name type="ordered locus">BSU04410</name>
</gene>